<reference key="1">
    <citation type="journal article" date="2001" name="Lancet">
        <title>Whole genome sequencing of meticillin-resistant Staphylococcus aureus.</title>
        <authorList>
            <person name="Kuroda M."/>
            <person name="Ohta T."/>
            <person name="Uchiyama I."/>
            <person name="Baba T."/>
            <person name="Yuzawa H."/>
            <person name="Kobayashi I."/>
            <person name="Cui L."/>
            <person name="Oguchi A."/>
            <person name="Aoki K."/>
            <person name="Nagai Y."/>
            <person name="Lian J.-Q."/>
            <person name="Ito T."/>
            <person name="Kanamori M."/>
            <person name="Matsumaru H."/>
            <person name="Maruyama A."/>
            <person name="Murakami H."/>
            <person name="Hosoyama A."/>
            <person name="Mizutani-Ui Y."/>
            <person name="Takahashi N.K."/>
            <person name="Sawano T."/>
            <person name="Inoue R."/>
            <person name="Kaito C."/>
            <person name="Sekimizu K."/>
            <person name="Hirakawa H."/>
            <person name="Kuhara S."/>
            <person name="Goto S."/>
            <person name="Yabuzaki J."/>
            <person name="Kanehisa M."/>
            <person name="Yamashita A."/>
            <person name="Oshima K."/>
            <person name="Furuya K."/>
            <person name="Yoshino C."/>
            <person name="Shiba T."/>
            <person name="Hattori M."/>
            <person name="Ogasawara N."/>
            <person name="Hayashi H."/>
            <person name="Hiramatsu K."/>
        </authorList>
    </citation>
    <scope>NUCLEOTIDE SEQUENCE [LARGE SCALE GENOMIC DNA]</scope>
    <source>
        <strain>Mu50 / ATCC 700699</strain>
    </source>
</reference>
<accession>P0A0A1</accession>
<accession>Q9L6H5</accession>
<comment type="function">
    <text evidence="1">The pyruvate dehydrogenase complex catalyzes the overall conversion of pyruvate to acetyl-CoA and CO(2). It contains multiple copies of three enzymatic components: pyruvate dehydrogenase (E1), dihydrolipoamide acetyltransferase (E2) and lipoamide dehydrogenase (E3) (By similarity).</text>
</comment>
<comment type="catalytic activity">
    <reaction>
        <text>N(6)-[(R)-lipoyl]-L-lysyl-[protein] + pyruvate + H(+) = N(6)-[(R)-S(8)-acetyldihydrolipoyl]-L-lysyl-[protein] + CO2</text>
        <dbReference type="Rhea" id="RHEA:19189"/>
        <dbReference type="Rhea" id="RHEA-COMP:10474"/>
        <dbReference type="Rhea" id="RHEA-COMP:10478"/>
        <dbReference type="ChEBI" id="CHEBI:15361"/>
        <dbReference type="ChEBI" id="CHEBI:15378"/>
        <dbReference type="ChEBI" id="CHEBI:16526"/>
        <dbReference type="ChEBI" id="CHEBI:83099"/>
        <dbReference type="ChEBI" id="CHEBI:83111"/>
        <dbReference type="EC" id="1.2.4.1"/>
    </reaction>
</comment>
<comment type="cofactor">
    <cofactor evidence="1">
        <name>thiamine diphosphate</name>
        <dbReference type="ChEBI" id="CHEBI:58937"/>
    </cofactor>
</comment>
<comment type="subunit">
    <text>Heterodimer of an alpha and a beta chain.</text>
</comment>
<keyword id="KW-0560">Oxidoreductase</keyword>
<keyword id="KW-0670">Pyruvate</keyword>
<keyword id="KW-0786">Thiamine pyrophosphate</keyword>
<evidence type="ECO:0000250" key="1"/>
<sequence>MAQMTMVQAINDALKTELKNDQDVLIFGEDVGVNGGVFRVTEGLQKEFGEDRVFDTPLAESGIGGLAMGLAVEGFRPVMEVQFLGFVFEVFDAIAGQIARTRFRSGGTKTAPVTIRSPFGGGVHTPELHADNLEGILAQSPGLKVVIPSGPYDAKGLLISSIRSNDPVVYLEHMKLYRSFREEVPEEEYTIDIGKANVKKEGNDISIITYGAMVQESMKAAEELEKDGYSVEVIDLRTVQPIDVDTIVASVEKTGRAVVVQEAQRQAGVGAAVVAELSERAILSLEAPIGRVAAADTIYPFTQAENVWLPNKNDIIEKAKETLEF</sequence>
<organism>
    <name type="scientific">Staphylococcus aureus (strain Mu50 / ATCC 700699)</name>
    <dbReference type="NCBI Taxonomy" id="158878"/>
    <lineage>
        <taxon>Bacteria</taxon>
        <taxon>Bacillati</taxon>
        <taxon>Bacillota</taxon>
        <taxon>Bacilli</taxon>
        <taxon>Bacillales</taxon>
        <taxon>Staphylococcaceae</taxon>
        <taxon>Staphylococcus</taxon>
    </lineage>
</organism>
<gene>
    <name type="primary">pdhB</name>
    <name type="ordered locus">SAV1094</name>
</gene>
<feature type="chain" id="PRO_0000162229" description="Pyruvate dehydrogenase E1 component subunit beta">
    <location>
        <begin position="1"/>
        <end position="325"/>
    </location>
</feature>
<feature type="binding site" evidence="1">
    <location>
        <position position="60"/>
    </location>
    <ligand>
        <name>thiamine diphosphate</name>
        <dbReference type="ChEBI" id="CHEBI:58937"/>
    </ligand>
</feature>
<proteinExistence type="inferred from homology"/>
<name>ODPB_STAAM</name>
<protein>
    <recommendedName>
        <fullName>Pyruvate dehydrogenase E1 component subunit beta</fullName>
        <ecNumber>1.2.4.1</ecNumber>
    </recommendedName>
</protein>
<dbReference type="EC" id="1.2.4.1"/>
<dbReference type="EMBL" id="BA000017">
    <property type="protein sequence ID" value="BAB57256.1"/>
    <property type="molecule type" value="Genomic_DNA"/>
</dbReference>
<dbReference type="RefSeq" id="WP_000068176.1">
    <property type="nucleotide sequence ID" value="NC_002758.2"/>
</dbReference>
<dbReference type="SMR" id="P0A0A1"/>
<dbReference type="KEGG" id="sav:SAV1094"/>
<dbReference type="HOGENOM" id="CLU_012907_1_0_9"/>
<dbReference type="PhylomeDB" id="P0A0A1"/>
<dbReference type="Proteomes" id="UP000002481">
    <property type="component" value="Chromosome"/>
</dbReference>
<dbReference type="GO" id="GO:0004739">
    <property type="term" value="F:pyruvate dehydrogenase (acetyl-transferring) activity"/>
    <property type="evidence" value="ECO:0007669"/>
    <property type="project" value="UniProtKB-EC"/>
</dbReference>
<dbReference type="CDD" id="cd07036">
    <property type="entry name" value="TPP_PYR_E1-PDHc-beta_like"/>
    <property type="match status" value="1"/>
</dbReference>
<dbReference type="FunFam" id="3.40.50.920:FF:000001">
    <property type="entry name" value="Pyruvate dehydrogenase E1 beta subunit"/>
    <property type="match status" value="1"/>
</dbReference>
<dbReference type="FunFam" id="3.40.50.970:FF:000001">
    <property type="entry name" value="Pyruvate dehydrogenase E1 beta subunit"/>
    <property type="match status" value="1"/>
</dbReference>
<dbReference type="Gene3D" id="3.40.50.920">
    <property type="match status" value="1"/>
</dbReference>
<dbReference type="Gene3D" id="3.40.50.970">
    <property type="match status" value="1"/>
</dbReference>
<dbReference type="InterPro" id="IPR029061">
    <property type="entry name" value="THDP-binding"/>
</dbReference>
<dbReference type="InterPro" id="IPR009014">
    <property type="entry name" value="Transketo_C/PFOR_II"/>
</dbReference>
<dbReference type="InterPro" id="IPR005475">
    <property type="entry name" value="Transketolase-like_Pyr-bd"/>
</dbReference>
<dbReference type="InterPro" id="IPR033248">
    <property type="entry name" value="Transketolase_C"/>
</dbReference>
<dbReference type="PANTHER" id="PTHR43257">
    <property type="entry name" value="PYRUVATE DEHYDROGENASE E1 COMPONENT BETA SUBUNIT"/>
    <property type="match status" value="1"/>
</dbReference>
<dbReference type="PANTHER" id="PTHR43257:SF2">
    <property type="entry name" value="PYRUVATE DEHYDROGENASE E1 COMPONENT SUBUNIT BETA"/>
    <property type="match status" value="1"/>
</dbReference>
<dbReference type="Pfam" id="PF02779">
    <property type="entry name" value="Transket_pyr"/>
    <property type="match status" value="1"/>
</dbReference>
<dbReference type="Pfam" id="PF02780">
    <property type="entry name" value="Transketolase_C"/>
    <property type="match status" value="1"/>
</dbReference>
<dbReference type="SMART" id="SM00861">
    <property type="entry name" value="Transket_pyr"/>
    <property type="match status" value="1"/>
</dbReference>
<dbReference type="SUPFAM" id="SSF52518">
    <property type="entry name" value="Thiamin diphosphate-binding fold (THDP-binding)"/>
    <property type="match status" value="1"/>
</dbReference>
<dbReference type="SUPFAM" id="SSF52922">
    <property type="entry name" value="TK C-terminal domain-like"/>
    <property type="match status" value="1"/>
</dbReference>